<protein>
    <recommendedName>
        <fullName>Presenilin-associated rhomboid-like protein, mitochondrial</fullName>
        <ecNumber evidence="7">3.4.21.105</ecNumber>
    </recommendedName>
    <alternativeName>
        <fullName>Mitochondrial intramembrane cleaving protease PARL</fullName>
    </alternativeName>
    <component>
        <recommendedName>
            <fullName>P-beta</fullName>
            <shortName>Pbeta</shortName>
        </recommendedName>
    </component>
</protein>
<evidence type="ECO:0000250" key="1"/>
<evidence type="ECO:0000250" key="2">
    <source>
        <dbReference type="UniProtKB" id="Q5XJY4"/>
    </source>
</evidence>
<evidence type="ECO:0000255" key="3"/>
<evidence type="ECO:0000269" key="4">
    <source>
    </source>
</evidence>
<evidence type="ECO:0000269" key="5">
    <source>
    </source>
</evidence>
<evidence type="ECO:0000269" key="6">
    <source>
    </source>
</evidence>
<evidence type="ECO:0000269" key="7">
    <source>
    </source>
</evidence>
<evidence type="ECO:0000269" key="8">
    <source>
    </source>
</evidence>
<evidence type="ECO:0000269" key="9">
    <source>
    </source>
</evidence>
<evidence type="ECO:0000269" key="10">
    <source>
    </source>
</evidence>
<evidence type="ECO:0000269" key="11">
    <source ref="3"/>
</evidence>
<evidence type="ECO:0000303" key="12">
    <source>
    </source>
</evidence>
<evidence type="ECO:0000305" key="13"/>
<dbReference type="EC" id="3.4.21.105" evidence="7"/>
<dbReference type="EMBL" id="AF197937">
    <property type="protein sequence ID" value="AAG28519.1"/>
    <property type="molecule type" value="mRNA"/>
</dbReference>
<dbReference type="EMBL" id="BC003653">
    <property type="protein sequence ID" value="AAH03653.1"/>
    <property type="molecule type" value="mRNA"/>
</dbReference>
<dbReference type="EMBL" id="BC014058">
    <property type="protein sequence ID" value="AAH14058.1"/>
    <property type="molecule type" value="mRNA"/>
</dbReference>
<dbReference type="EMBL" id="AF116692">
    <property type="protein sequence ID" value="AAF71112.1"/>
    <property type="molecule type" value="mRNA"/>
</dbReference>
<dbReference type="CCDS" id="CCDS3248.1">
    <molecule id="Q9H300-1"/>
</dbReference>
<dbReference type="CCDS" id="CCDS33897.1">
    <molecule id="Q9H300-2"/>
</dbReference>
<dbReference type="RefSeq" id="NP_001032728.1">
    <molecule id="Q9H300-2"/>
    <property type="nucleotide sequence ID" value="NM_001037639.3"/>
</dbReference>
<dbReference type="RefSeq" id="NP_061092.3">
    <molecule id="Q9H300-1"/>
    <property type="nucleotide sequence ID" value="NM_018622.6"/>
</dbReference>
<dbReference type="SMR" id="Q9H300"/>
<dbReference type="BioGRID" id="120678">
    <property type="interactions" value="226"/>
</dbReference>
<dbReference type="CORUM" id="Q9H300"/>
<dbReference type="FunCoup" id="Q9H300">
    <property type="interactions" value="2935"/>
</dbReference>
<dbReference type="IntAct" id="Q9H300">
    <property type="interactions" value="203"/>
</dbReference>
<dbReference type="MINT" id="Q9H300"/>
<dbReference type="STRING" id="9606.ENSP00000325421"/>
<dbReference type="BindingDB" id="Q9H300"/>
<dbReference type="ChEMBL" id="CHEMBL4879516"/>
<dbReference type="MEROPS" id="S54.009"/>
<dbReference type="TCDB" id="9.B.104.1.6">
    <property type="family name" value="the rhomboid protease (rhomboid) family"/>
</dbReference>
<dbReference type="iPTMnet" id="Q9H300"/>
<dbReference type="PhosphoSitePlus" id="Q9H300"/>
<dbReference type="SwissPalm" id="Q9H300"/>
<dbReference type="BioMuta" id="PARL"/>
<dbReference type="DMDM" id="143811433"/>
<dbReference type="jPOST" id="Q9H300"/>
<dbReference type="MassIVE" id="Q9H300"/>
<dbReference type="PaxDb" id="9606-ENSP00000325421"/>
<dbReference type="PeptideAtlas" id="Q9H300"/>
<dbReference type="ProteomicsDB" id="80637">
    <molecule id="Q9H300-1"/>
</dbReference>
<dbReference type="ProteomicsDB" id="80638">
    <molecule id="Q9H300-2"/>
</dbReference>
<dbReference type="Pumba" id="Q9H300"/>
<dbReference type="Antibodypedia" id="18935">
    <property type="antibodies" value="163 antibodies from 31 providers"/>
</dbReference>
<dbReference type="DNASU" id="55486"/>
<dbReference type="Ensembl" id="ENST00000311101.9">
    <molecule id="Q9H300-2"/>
    <property type="protein sequence ID" value="ENSP00000310676.5"/>
    <property type="gene ID" value="ENSG00000175193.14"/>
</dbReference>
<dbReference type="Ensembl" id="ENST00000317096.9">
    <molecule id="Q9H300-1"/>
    <property type="protein sequence ID" value="ENSP00000325421.5"/>
    <property type="gene ID" value="ENSG00000175193.14"/>
</dbReference>
<dbReference type="GeneID" id="55486"/>
<dbReference type="KEGG" id="hsa:55486"/>
<dbReference type="MANE-Select" id="ENST00000317096.9">
    <property type="protein sequence ID" value="ENSP00000325421.5"/>
    <property type="RefSeq nucleotide sequence ID" value="NM_018622.7"/>
    <property type="RefSeq protein sequence ID" value="NP_061092.3"/>
</dbReference>
<dbReference type="UCSC" id="uc003fmd.4">
    <molecule id="Q9H300-1"/>
    <property type="organism name" value="human"/>
</dbReference>
<dbReference type="AGR" id="HGNC:18253"/>
<dbReference type="CTD" id="55486"/>
<dbReference type="DisGeNET" id="55486"/>
<dbReference type="GeneCards" id="PARL"/>
<dbReference type="HGNC" id="HGNC:18253">
    <property type="gene designation" value="PARL"/>
</dbReference>
<dbReference type="HPA" id="ENSG00000175193">
    <property type="expression patterns" value="Low tissue specificity"/>
</dbReference>
<dbReference type="MIM" id="607858">
    <property type="type" value="gene"/>
</dbReference>
<dbReference type="neXtProt" id="NX_Q9H300"/>
<dbReference type="OpenTargets" id="ENSG00000175193"/>
<dbReference type="PharmGKB" id="PA134939789"/>
<dbReference type="VEuPathDB" id="HostDB:ENSG00000175193"/>
<dbReference type="eggNOG" id="KOG2980">
    <property type="taxonomic scope" value="Eukaryota"/>
</dbReference>
<dbReference type="GeneTree" id="ENSGT00390000013063"/>
<dbReference type="HOGENOM" id="CLU_034022_0_1_1"/>
<dbReference type="InParanoid" id="Q9H300"/>
<dbReference type="OMA" id="WVKQELW"/>
<dbReference type="OrthoDB" id="10260614at2759"/>
<dbReference type="PAN-GO" id="Q9H300">
    <property type="GO annotations" value="3 GO annotations based on evolutionary models"/>
</dbReference>
<dbReference type="PhylomeDB" id="Q9H300"/>
<dbReference type="TreeFam" id="TF313603"/>
<dbReference type="BRENDA" id="3.4.21.105">
    <property type="organism ID" value="2681"/>
</dbReference>
<dbReference type="PathwayCommons" id="Q9H300"/>
<dbReference type="Reactome" id="R-HSA-8949664">
    <property type="pathway name" value="Processing of SMDT1"/>
</dbReference>
<dbReference type="SignaLink" id="Q9H300"/>
<dbReference type="SIGNOR" id="Q9H300"/>
<dbReference type="BioGRID-ORCS" id="55486">
    <property type="hits" value="131 hits in 1160 CRISPR screens"/>
</dbReference>
<dbReference type="ChiTaRS" id="PARL">
    <property type="organism name" value="human"/>
</dbReference>
<dbReference type="GeneWiki" id="PARL"/>
<dbReference type="GenomeRNAi" id="55486"/>
<dbReference type="Pharos" id="Q9H300">
    <property type="development level" value="Tchem"/>
</dbReference>
<dbReference type="PRO" id="PR:Q9H300"/>
<dbReference type="Proteomes" id="UP000005640">
    <property type="component" value="Chromosome 3"/>
</dbReference>
<dbReference type="RNAct" id="Q9H300">
    <property type="molecule type" value="protein"/>
</dbReference>
<dbReference type="Bgee" id="ENSG00000175193">
    <property type="expression patterns" value="Expressed in monocyte and 100 other cell types or tissues"/>
</dbReference>
<dbReference type="ExpressionAtlas" id="Q9H300">
    <property type="expression patterns" value="baseline and differential"/>
</dbReference>
<dbReference type="GO" id="GO:0005743">
    <property type="term" value="C:mitochondrial inner membrane"/>
    <property type="evidence" value="ECO:0000304"/>
    <property type="project" value="ParkinsonsUK-UCL"/>
</dbReference>
<dbReference type="GO" id="GO:0005739">
    <property type="term" value="C:mitochondrion"/>
    <property type="evidence" value="ECO:0000314"/>
    <property type="project" value="UniProtKB"/>
</dbReference>
<dbReference type="GO" id="GO:0005634">
    <property type="term" value="C:nucleus"/>
    <property type="evidence" value="ECO:0007669"/>
    <property type="project" value="UniProtKB-SubCell"/>
</dbReference>
<dbReference type="GO" id="GO:0004175">
    <property type="term" value="F:endopeptidase activity"/>
    <property type="evidence" value="ECO:0000314"/>
    <property type="project" value="UniProtKB"/>
</dbReference>
<dbReference type="GO" id="GO:0004252">
    <property type="term" value="F:serine-type endopeptidase activity"/>
    <property type="evidence" value="ECO:0000315"/>
    <property type="project" value="UniProtKB"/>
</dbReference>
<dbReference type="GO" id="GO:0033619">
    <property type="term" value="P:membrane protein proteolysis"/>
    <property type="evidence" value="ECO:0000314"/>
    <property type="project" value="UniProtKB"/>
</dbReference>
<dbReference type="GO" id="GO:0008053">
    <property type="term" value="P:mitochondrial fusion"/>
    <property type="evidence" value="ECO:0007669"/>
    <property type="project" value="Ensembl"/>
</dbReference>
<dbReference type="GO" id="GO:2001243">
    <property type="term" value="P:negative regulation of intrinsic apoptotic signaling pathway"/>
    <property type="evidence" value="ECO:0007669"/>
    <property type="project" value="Ensembl"/>
</dbReference>
<dbReference type="GO" id="GO:0090201">
    <property type="term" value="P:negative regulation of release of cytochrome c from mitochondria"/>
    <property type="evidence" value="ECO:0007669"/>
    <property type="project" value="Ensembl"/>
</dbReference>
<dbReference type="GO" id="GO:0016485">
    <property type="term" value="P:protein processing"/>
    <property type="evidence" value="ECO:0000315"/>
    <property type="project" value="UniProtKB"/>
</dbReference>
<dbReference type="GO" id="GO:0006508">
    <property type="term" value="P:proteolysis"/>
    <property type="evidence" value="ECO:0000315"/>
    <property type="project" value="ParkinsonsUK-UCL"/>
</dbReference>
<dbReference type="GO" id="GO:0010821">
    <property type="term" value="P:regulation of mitochondrion organization"/>
    <property type="evidence" value="ECO:0000315"/>
    <property type="project" value="ParkinsonsUK-UCL"/>
</dbReference>
<dbReference type="GO" id="GO:1901524">
    <property type="term" value="P:regulation of mitophagy"/>
    <property type="evidence" value="ECO:0000250"/>
    <property type="project" value="ParkinsonsUK-UCL"/>
</dbReference>
<dbReference type="GO" id="GO:1903214">
    <property type="term" value="P:regulation of protein targeting to mitochondrion"/>
    <property type="evidence" value="ECO:0000316"/>
    <property type="project" value="ParkinsonsUK-UCL"/>
</dbReference>
<dbReference type="GO" id="GO:0030162">
    <property type="term" value="P:regulation of proteolysis"/>
    <property type="evidence" value="ECO:0000316"/>
    <property type="project" value="ParkinsonsUK-UCL"/>
</dbReference>
<dbReference type="GO" id="GO:2000377">
    <property type="term" value="P:regulation of reactive oxygen species metabolic process"/>
    <property type="evidence" value="ECO:0000315"/>
    <property type="project" value="ParkinsonsUK-UCL"/>
</dbReference>
<dbReference type="GO" id="GO:0006465">
    <property type="term" value="P:signal peptide processing"/>
    <property type="evidence" value="ECO:0000318"/>
    <property type="project" value="GO_Central"/>
</dbReference>
<dbReference type="FunFam" id="1.20.1540.10:FF:000005">
    <property type="entry name" value="Presenilins-associated rhomboid-like protein, mitochondrial"/>
    <property type="match status" value="1"/>
</dbReference>
<dbReference type="Gene3D" id="1.20.1540.10">
    <property type="entry name" value="Rhomboid-like"/>
    <property type="match status" value="1"/>
</dbReference>
<dbReference type="InterPro" id="IPR022764">
    <property type="entry name" value="Peptidase_S54_rhomboid_dom"/>
</dbReference>
<dbReference type="InterPro" id="IPR035952">
    <property type="entry name" value="Rhomboid-like_sf"/>
</dbReference>
<dbReference type="InterPro" id="IPR050925">
    <property type="entry name" value="Rhomboid_protease_S54"/>
</dbReference>
<dbReference type="PANTHER" id="PTHR43731:SF14">
    <property type="entry name" value="PRESENILIN-ASSOCIATED RHOMBOID-LIKE PROTEIN, MITOCHONDRIAL"/>
    <property type="match status" value="1"/>
</dbReference>
<dbReference type="PANTHER" id="PTHR43731">
    <property type="entry name" value="RHOMBOID PROTEASE"/>
    <property type="match status" value="1"/>
</dbReference>
<dbReference type="Pfam" id="PF01694">
    <property type="entry name" value="Rhomboid"/>
    <property type="match status" value="1"/>
</dbReference>
<dbReference type="SUPFAM" id="SSF144091">
    <property type="entry name" value="Rhomboid-like"/>
    <property type="match status" value="1"/>
</dbReference>
<name>PARL_HUMAN</name>
<keyword id="KW-0025">Alternative splicing</keyword>
<keyword id="KW-0903">Direct protein sequencing</keyword>
<keyword id="KW-0378">Hydrolase</keyword>
<keyword id="KW-0472">Membrane</keyword>
<keyword id="KW-0496">Mitochondrion</keyword>
<keyword id="KW-0999">Mitochondrion inner membrane</keyword>
<keyword id="KW-0539">Nucleus</keyword>
<keyword id="KW-0597">Phosphoprotein</keyword>
<keyword id="KW-0645">Protease</keyword>
<keyword id="KW-1267">Proteomics identification</keyword>
<keyword id="KW-1185">Reference proteome</keyword>
<keyword id="KW-0720">Serine protease</keyword>
<keyword id="KW-0809">Transit peptide</keyword>
<keyword id="KW-0812">Transmembrane</keyword>
<keyword id="KW-1133">Transmembrane helix</keyword>
<comment type="function">
    <text evidence="2 5 6 7 8 9 10">Required for the control of apoptosis during postnatal growth. Essential for proteolytic processing of an antiapoptotic form of OPA1 which prevents the release of mitochondrial cytochrome c in response to intrinsic apoptotic signals (By similarity). Required for the maturation of PINK1 into its 52kDa mature form after its cleavage by mitochondrial-processing peptidase (MPP) (PubMed:22354088). Promotes cleavage of serine/threonine-protein phosphatase PGAM5 in damaged mitochondria in response to loss of mitochondrial membrane potential (PubMed:22915595). Mediates differential cleavage of PINK1 and PGAM5 depending on the health status of mitochondria, disassociating from PINK1 and associating with PGAM5 in response to mitochondrial membrane potential loss (PubMed:22915595). Required for processing of CLPB into a form with higher protein disaggregase activity by removing an autoinhibitory N-terminal peptide (PubMed:28288130, PubMed:32573439). Promotes processing of DIABLO/SMAC in the mitochondrion which is required for DIABLO apoptotic activity (PubMed:28288130). Also required for cleavage of STARD7 and TTC19 (PubMed:28288130). Promotes changes in mitochondria morphology regulated by phosphorylation of P-beta domain (PubMed:14732705, PubMed:17116872).</text>
</comment>
<comment type="catalytic activity">
    <reaction evidence="7">
        <text>Cleaves type-1 transmembrane domains using a catalytic dyad composed of serine and histidine that are contributed by different transmembrane domains.</text>
        <dbReference type="EC" id="3.4.21.105"/>
    </reaction>
</comment>
<comment type="subunit">
    <text evidence="4">Interacts with PSEN1 and PSEN2. Binds OPA1.</text>
</comment>
<comment type="subcellular location">
    <subcellularLocation>
        <location evidence="6 7">Mitochondrion inner membrane</location>
        <topology evidence="6">Multi-pass membrane protein</topology>
    </subcellularLocation>
</comment>
<comment type="subcellular location">
    <molecule>P-beta</molecule>
    <subcellularLocation>
        <location evidence="6">Nucleus</location>
    </subcellularLocation>
    <text evidence="6">Translocated into the nucleus by an unknown mechanism (PubMed:17116872).</text>
</comment>
<comment type="alternative products">
    <event type="alternative splicing"/>
    <isoform>
        <id>Q9H300-1</id>
        <name>1</name>
        <sequence type="displayed"/>
    </isoform>
    <isoform>
        <id>Q9H300-2</id>
        <name>2</name>
        <sequence type="described" ref="VSP_013310"/>
    </isoform>
</comment>
<comment type="PTM">
    <text evidence="6">P-beta is proteolytically processed (beta-cleavage) in a PARL-dependent manner. The cleavage is inhibited when residues Ser-65, Thr-69 and Ser-70 are all phosphorylated.</text>
</comment>
<comment type="similarity">
    <text evidence="13">Belongs to the peptidase S54 family.</text>
</comment>
<gene>
    <name type="primary">PARL</name>
    <name type="synonym">PSARL</name>
    <name type="ORF">PRO2207</name>
</gene>
<organism>
    <name type="scientific">Homo sapiens</name>
    <name type="common">Human</name>
    <dbReference type="NCBI Taxonomy" id="9606"/>
    <lineage>
        <taxon>Eukaryota</taxon>
        <taxon>Metazoa</taxon>
        <taxon>Chordata</taxon>
        <taxon>Craniata</taxon>
        <taxon>Vertebrata</taxon>
        <taxon>Euteleostomi</taxon>
        <taxon>Mammalia</taxon>
        <taxon>Eutheria</taxon>
        <taxon>Euarchontoglires</taxon>
        <taxon>Primates</taxon>
        <taxon>Haplorrhini</taxon>
        <taxon>Catarrhini</taxon>
        <taxon>Hominidae</taxon>
        <taxon>Homo</taxon>
    </lineage>
</organism>
<accession>Q9H300</accession>
<accession>Q96CQ4</accession>
<accession>Q9BTJ6</accession>
<accession>Q9P1E3</accession>
<proteinExistence type="evidence at protein level"/>
<reference key="1">
    <citation type="journal article" date="2001" name="J. Alzheimers Dis.">
        <title>PAMP and PARL, two novel putative metalloproteases interacting with the COOH-terminus of presenilin-1 and -2.</title>
        <authorList>
            <person name="Pellegrini L."/>
            <person name="Passer B.J."/>
            <person name="Canelles M."/>
            <person name="Lefterov I."/>
            <person name="Ganjei J.K."/>
            <person name="Fowlkes B.J."/>
            <person name="Koonin E.V."/>
            <person name="D'Adamio L."/>
        </authorList>
    </citation>
    <scope>NUCLEOTIDE SEQUENCE [MRNA] (ISOFORM 1)</scope>
    <scope>VARIANT LEU-262</scope>
    <scope>INTERACTION WITH PSEN1 AND PSEN2</scope>
</reference>
<reference key="2">
    <citation type="journal article" date="2004" name="Genome Res.">
        <title>The status, quality, and expansion of the NIH full-length cDNA project: the Mammalian Gene Collection (MGC).</title>
        <authorList>
            <consortium name="The MGC Project Team"/>
        </authorList>
    </citation>
    <scope>NUCLEOTIDE SEQUENCE [LARGE SCALE MRNA] (ISOFORMS 1 AND 2)</scope>
    <source>
        <tissue>Lung</tissue>
    </source>
</reference>
<reference key="3">
    <citation type="submission" date="1998-12" db="EMBL/GenBank/DDBJ databases">
        <title>Functional prediction of the coding sequences of 121 new genes deduced by analysis of cDNA clones from human fetal liver.</title>
        <authorList>
            <person name="Zhang C."/>
            <person name="Yu Y."/>
            <person name="Zhang S."/>
            <person name="Wei H."/>
            <person name="Zhou G."/>
            <person name="Ouyang S."/>
            <person name="Luo L."/>
            <person name="Bi J."/>
            <person name="Liu M."/>
            <person name="He F."/>
        </authorList>
    </citation>
    <scope>NUCLEOTIDE SEQUENCE [LARGE SCALE MRNA] OF 192-379 (ISOFORM 1)</scope>
    <scope>VARIANT LEU-262</scope>
    <source>
        <tissue>Fetal liver</tissue>
    </source>
</reference>
<reference key="4">
    <citation type="journal article" date="2004" name="J. Biol. Chem.">
        <title>Self-regulated cleavage of the mitochondrial intramembrane-cleaving protease PARL yields Pbeta, a nuclear-targeted peptide.</title>
        <authorList>
            <person name="Sik A."/>
            <person name="Passer B.J."/>
            <person name="Koonin E.V."/>
            <person name="Pellegrini L."/>
        </authorList>
    </citation>
    <scope>PROTEIN SEQUENCE OF 53-61 AND 78-85</scope>
    <scope>FUNCTION IN BETA CLEAVAGE</scope>
    <scope>MUTAGENESIS OF ARG-76; SER-77; ALA-78 AND LEU-79</scope>
</reference>
<reference key="5">
    <citation type="journal article" date="2006" name="Proc. Natl. Acad. Sci. U.S.A.">
        <title>Phosphorylation and cleavage of presenilin-associated rhomboid-like protein (PARL) promotes changes in mitochondrial morphology.</title>
        <authorList>
            <person name="Jeyaraju D.V."/>
            <person name="Xu L."/>
            <person name="Letellier M.-C."/>
            <person name="Bandaru S."/>
            <person name="Zunino R."/>
            <person name="Berg E.A."/>
            <person name="McBride H.M."/>
            <person name="Pellegrini L."/>
        </authorList>
    </citation>
    <scope>FUNCTION</scope>
    <scope>PHOSPHORYLATION AT SER-65; THR-69 AND SER-70 OF P-BETA</scope>
    <scope>MUTAGENESIS OF SER-65; THR-69 AND SER-70</scope>
    <scope>SUBCELLULAR LOCATION</scope>
    <scope>TOPOLOGY</scope>
    <scope>BETA-CLEAVAGE</scope>
</reference>
<reference key="6">
    <citation type="journal article" date="2012" name="EMBO Rep.">
        <title>Mitochondrial processing peptidase regulates PINK1 processing, import and Parkin recruitment.</title>
        <authorList>
            <person name="Greene A.W."/>
            <person name="Grenier K."/>
            <person name="Aguileta M.A."/>
            <person name="Muise S."/>
            <person name="Farazifard R."/>
            <person name="Haque M.E."/>
            <person name="McBride H.M."/>
            <person name="Park D.S."/>
            <person name="Fon E.A."/>
        </authorList>
    </citation>
    <scope>FUNCTION</scope>
    <scope>CATALYTIC ACTIVITY</scope>
    <scope>SUBCELLULAR LOCATION</scope>
</reference>
<reference key="7">
    <citation type="journal article" date="2012" name="J. Biol. Chem.">
        <title>Rhomboid protease PARL mediates the mitochondrial membrane potential loss-induced cleavage of PGAM5.</title>
        <authorList>
            <person name="Sekine S."/>
            <person name="Kanamaru Y."/>
            <person name="Koike M."/>
            <person name="Nishihara A."/>
            <person name="Okada M."/>
            <person name="Kinoshita H."/>
            <person name="Kamiyama M."/>
            <person name="Maruyama J."/>
            <person name="Uchiyama Y."/>
            <person name="Ishihara N."/>
            <person name="Takeda K."/>
            <person name="Ichijo H."/>
        </authorList>
    </citation>
    <scope>FUNCTION</scope>
    <scope>MUTAGENESIS OF SER-277 AND HIS-335</scope>
</reference>
<reference key="8">
    <citation type="journal article" date="2017" name="Nat. Cell Biol.">
        <title>PARL mediates Smac proteolytic maturation in mitochondria to promote apoptosis.</title>
        <authorList>
            <person name="Saita S."/>
            <person name="Nolte H."/>
            <person name="Fiedler K.U."/>
            <person name="Kashkar H."/>
            <person name="Venne A.S."/>
            <person name="Zahedi R.P."/>
            <person name="Krueger M."/>
            <person name="Langer T."/>
        </authorList>
    </citation>
    <scope>FUNCTION</scope>
    <scope>MUTAGENESIS OF SER-277</scope>
</reference>
<reference key="9">
    <citation type="journal article" date="2020" name="Elife">
        <title>Skd3 (human ClpB) is a potent mitochondrial protein disaggregase that is inactivated by 3-methylglutaconic aciduria-linked mutations.</title>
        <authorList>
            <person name="Cupo R.R."/>
            <person name="Shorter J."/>
        </authorList>
    </citation>
    <scope>FUNCTION</scope>
</reference>
<feature type="transit peptide" description="Mitochondrion" evidence="5">
    <location>
        <begin position="1"/>
        <end position="52"/>
    </location>
</feature>
<feature type="chain" id="PRO_0000027386" description="Presenilin-associated rhomboid-like protein, mitochondrial">
    <location>
        <begin position="53"/>
        <end position="379"/>
    </location>
</feature>
<feature type="peptide" id="PRO_0000027387" description="P-beta" evidence="5">
    <location>
        <begin position="53"/>
        <end position="77"/>
    </location>
</feature>
<feature type="topological domain" description="Mitochondrial matrix" evidence="3">
    <location>
        <begin position="53"/>
        <end position="101"/>
    </location>
</feature>
<feature type="transmembrane region" description="Helical" evidence="3">
    <location>
        <begin position="102"/>
        <end position="121"/>
    </location>
</feature>
<feature type="topological domain" description="Mitochondrial intermembrane" evidence="3">
    <location>
        <begin position="122"/>
        <end position="167"/>
    </location>
</feature>
<feature type="transmembrane region" description="Helical" evidence="3">
    <location>
        <begin position="168"/>
        <end position="187"/>
    </location>
</feature>
<feature type="topological domain" description="Mitochondrial matrix" evidence="3">
    <location>
        <begin position="188"/>
        <end position="207"/>
    </location>
</feature>
<feature type="transmembrane region" description="Helical" evidence="3">
    <location>
        <begin position="208"/>
        <end position="230"/>
    </location>
</feature>
<feature type="topological domain" description="Mitochondrial intermembrane" evidence="3">
    <location>
        <begin position="231"/>
        <end position="244"/>
    </location>
</feature>
<feature type="transmembrane region" description="Helical" evidence="3">
    <location>
        <begin position="245"/>
        <end position="262"/>
    </location>
</feature>
<feature type="topological domain" description="Mitochondrial matrix" evidence="3">
    <location>
        <begin position="263"/>
        <end position="272"/>
    </location>
</feature>
<feature type="transmembrane region" description="Helical" evidence="3">
    <location>
        <begin position="273"/>
        <end position="289"/>
    </location>
</feature>
<feature type="topological domain" description="Mitochondrial intermembrane" evidence="3">
    <location>
        <begin position="290"/>
        <end position="295"/>
    </location>
</feature>
<feature type="transmembrane region" description="Helical" evidence="3">
    <location>
        <begin position="296"/>
        <end position="318"/>
    </location>
</feature>
<feature type="topological domain" description="Mitochondrial matrix" evidence="3">
    <location>
        <begin position="319"/>
        <end position="332"/>
    </location>
</feature>
<feature type="transmembrane region" description="Helical" evidence="3">
    <location>
        <begin position="333"/>
        <end position="354"/>
    </location>
</feature>
<feature type="topological domain" description="Mitochondrial intermembrane" evidence="3">
    <location>
        <begin position="355"/>
        <end position="379"/>
    </location>
</feature>
<feature type="active site" description="Nucleophile" evidence="1">
    <location>
        <position position="277"/>
    </location>
</feature>
<feature type="active site" evidence="1">
    <location>
        <position position="335"/>
    </location>
</feature>
<feature type="modified residue" description="Phosphoserine" evidence="6">
    <location>
        <position position="65"/>
    </location>
</feature>
<feature type="modified residue" description="Phosphothreonine" evidence="6">
    <location>
        <position position="69"/>
    </location>
</feature>
<feature type="modified residue" description="Phosphoserine" evidence="6">
    <location>
        <position position="70"/>
    </location>
</feature>
<feature type="splice variant" id="VSP_013310" description="In isoform 2." evidence="12">
    <original>KVLCSPMLLSTFSHFSLFHMAANMYVLWSFSSSIVNILGQEQFMAVYLSAG</original>
    <variation>S</variation>
    <location>
        <begin position="203"/>
        <end position="253"/>
    </location>
</feature>
<feature type="sequence variant" id="VAR_029801" description="In dbSNP:rs4912470.">
    <original>A</original>
    <variation>G</variation>
    <location>
        <position position="137"/>
    </location>
</feature>
<feature type="sequence variant" id="VAR_021578" description="In dbSNP:rs3732581." evidence="4 11">
    <original>V</original>
    <variation>L</variation>
    <location>
        <position position="262"/>
    </location>
</feature>
<feature type="mutagenesis site" description="Strongly reduces the beta cleavage; when associated with D-69 and D-70." evidence="6">
    <original>S</original>
    <variation>D</variation>
    <location>
        <position position="65"/>
    </location>
</feature>
<feature type="mutagenesis site" description="Strongly reduces the beta cleavage; when associated with D-65 and D-70." evidence="6">
    <original>T</original>
    <variation>D</variation>
    <location>
        <position position="69"/>
    </location>
</feature>
<feature type="mutagenesis site" description="Strongly reduces the beta cleavage; when associated with D-65 and D-69." evidence="6">
    <original>S</original>
    <variation>D</variation>
    <location>
        <position position="70"/>
    </location>
</feature>
<feature type="mutagenesis site" description="Abolishes the beta cleavage." evidence="5">
    <original>R</original>
    <variation>E</variation>
    <location>
        <position position="76"/>
    </location>
</feature>
<feature type="mutagenesis site" description="Abolishes the beta cleavage." evidence="5">
    <original>R</original>
    <variation>G</variation>
    <location>
        <position position="76"/>
    </location>
</feature>
<feature type="mutagenesis site" description="Abolishes the beta cleavage." evidence="5">
    <original>S</original>
    <variation>E</variation>
    <location>
        <position position="77"/>
    </location>
</feature>
<feature type="mutagenesis site" description="Abolishes the beta cleavage." evidence="5">
    <original>A</original>
    <variation>E</variation>
    <location>
        <position position="78"/>
    </location>
</feature>
<feature type="mutagenesis site" description="Abolishes the beta cleavage." evidence="5">
    <original>L</original>
    <variation>E</variation>
    <location>
        <position position="79"/>
    </location>
</feature>
<feature type="mutagenesis site" description="Loss of cleavage of CLPB, DIABLO, STARD7 and TTC19." evidence="9">
    <original>S</original>
    <variation>A</variation>
    <location>
        <position position="277"/>
    </location>
</feature>
<feature type="mutagenesis site" description="Loss of PGAM5 cleavage." evidence="8">
    <original>S</original>
    <variation>G</variation>
    <location>
        <position position="277"/>
    </location>
</feature>
<feature type="mutagenesis site" description="Loss of PGAM5 cleavage." evidence="8">
    <original>H</original>
    <variation>A</variation>
    <location>
        <position position="335"/>
    </location>
</feature>
<sequence length="379" mass="42190">MAWRGWAQRGWGCGQAWGASVGGRSCEELTAVLTPPQLLGRRFNFFIQQKCGFRKAPRKVEPRRSDPGTSGEAYKRSALIPPVEETVFYPSPYPIRSLIKPLFFTVGFTGCAFGSAAIWQYESLKSRVQSYFDGIKADWLDSIRPQKEGDFRKEINKWWNNLSDGQRTVTGIIAANVLVFCLWRVPSLQRTMIRYFTSNPASKVLCSPMLLSTFSHFSLFHMAANMYVLWSFSSSIVNILGQEQFMAVYLSAGVISNFVSYVGKVATGRYGPSLGASGAIMTVLAAVCTKIPEGRLAIIFLPMFTFTAGNALKAIIAMDTAGMILGWKFFDHAAHLGGALFGIWYVTYGHELIWKNREPLVKIWHEIRTNGPKKGGGSK</sequence>